<reference key="1">
    <citation type="journal article" date="2004" name="Nat. Genet.">
        <title>Complete sequencing and characterization of 21,243 full-length human cDNAs.</title>
        <authorList>
            <person name="Ota T."/>
            <person name="Suzuki Y."/>
            <person name="Nishikawa T."/>
            <person name="Otsuki T."/>
            <person name="Sugiyama T."/>
            <person name="Irie R."/>
            <person name="Wakamatsu A."/>
            <person name="Hayashi K."/>
            <person name="Sato H."/>
            <person name="Nagai K."/>
            <person name="Kimura K."/>
            <person name="Makita H."/>
            <person name="Sekine M."/>
            <person name="Obayashi M."/>
            <person name="Nishi T."/>
            <person name="Shibahara T."/>
            <person name="Tanaka T."/>
            <person name="Ishii S."/>
            <person name="Yamamoto J."/>
            <person name="Saito K."/>
            <person name="Kawai Y."/>
            <person name="Isono Y."/>
            <person name="Nakamura Y."/>
            <person name="Nagahari K."/>
            <person name="Murakami K."/>
            <person name="Yasuda T."/>
            <person name="Iwayanagi T."/>
            <person name="Wagatsuma M."/>
            <person name="Shiratori A."/>
            <person name="Sudo H."/>
            <person name="Hosoiri T."/>
            <person name="Kaku Y."/>
            <person name="Kodaira H."/>
            <person name="Kondo H."/>
            <person name="Sugawara M."/>
            <person name="Takahashi M."/>
            <person name="Kanda K."/>
            <person name="Yokoi T."/>
            <person name="Furuya T."/>
            <person name="Kikkawa E."/>
            <person name="Omura Y."/>
            <person name="Abe K."/>
            <person name="Kamihara K."/>
            <person name="Katsuta N."/>
            <person name="Sato K."/>
            <person name="Tanikawa M."/>
            <person name="Yamazaki M."/>
            <person name="Ninomiya K."/>
            <person name="Ishibashi T."/>
            <person name="Yamashita H."/>
            <person name="Murakawa K."/>
            <person name="Fujimori K."/>
            <person name="Tanai H."/>
            <person name="Kimata M."/>
            <person name="Watanabe M."/>
            <person name="Hiraoka S."/>
            <person name="Chiba Y."/>
            <person name="Ishida S."/>
            <person name="Ono Y."/>
            <person name="Takiguchi S."/>
            <person name="Watanabe S."/>
            <person name="Yosida M."/>
            <person name="Hotuta T."/>
            <person name="Kusano J."/>
            <person name="Kanehori K."/>
            <person name="Takahashi-Fujii A."/>
            <person name="Hara H."/>
            <person name="Tanase T.-O."/>
            <person name="Nomura Y."/>
            <person name="Togiya S."/>
            <person name="Komai F."/>
            <person name="Hara R."/>
            <person name="Takeuchi K."/>
            <person name="Arita M."/>
            <person name="Imose N."/>
            <person name="Musashino K."/>
            <person name="Yuuki H."/>
            <person name="Oshima A."/>
            <person name="Sasaki N."/>
            <person name="Aotsuka S."/>
            <person name="Yoshikawa Y."/>
            <person name="Matsunawa H."/>
            <person name="Ichihara T."/>
            <person name="Shiohata N."/>
            <person name="Sano S."/>
            <person name="Moriya S."/>
            <person name="Momiyama H."/>
            <person name="Satoh N."/>
            <person name="Takami S."/>
            <person name="Terashima Y."/>
            <person name="Suzuki O."/>
            <person name="Nakagawa S."/>
            <person name="Senoh A."/>
            <person name="Mizoguchi H."/>
            <person name="Goto Y."/>
            <person name="Shimizu F."/>
            <person name="Wakebe H."/>
            <person name="Hishigaki H."/>
            <person name="Watanabe T."/>
            <person name="Sugiyama A."/>
            <person name="Takemoto M."/>
            <person name="Kawakami B."/>
            <person name="Yamazaki M."/>
            <person name="Watanabe K."/>
            <person name="Kumagai A."/>
            <person name="Itakura S."/>
            <person name="Fukuzumi Y."/>
            <person name="Fujimori Y."/>
            <person name="Komiyama M."/>
            <person name="Tashiro H."/>
            <person name="Tanigami A."/>
            <person name="Fujiwara T."/>
            <person name="Ono T."/>
            <person name="Yamada K."/>
            <person name="Fujii Y."/>
            <person name="Ozaki K."/>
            <person name="Hirao M."/>
            <person name="Ohmori Y."/>
            <person name="Kawabata A."/>
            <person name="Hikiji T."/>
            <person name="Kobatake N."/>
            <person name="Inagaki H."/>
            <person name="Ikema Y."/>
            <person name="Okamoto S."/>
            <person name="Okitani R."/>
            <person name="Kawakami T."/>
            <person name="Noguchi S."/>
            <person name="Itoh T."/>
            <person name="Shigeta K."/>
            <person name="Senba T."/>
            <person name="Matsumura K."/>
            <person name="Nakajima Y."/>
            <person name="Mizuno T."/>
            <person name="Morinaga M."/>
            <person name="Sasaki M."/>
            <person name="Togashi T."/>
            <person name="Oyama M."/>
            <person name="Hata H."/>
            <person name="Watanabe M."/>
            <person name="Komatsu T."/>
            <person name="Mizushima-Sugano J."/>
            <person name="Satoh T."/>
            <person name="Shirai Y."/>
            <person name="Takahashi Y."/>
            <person name="Nakagawa K."/>
            <person name="Okumura K."/>
            <person name="Nagase T."/>
            <person name="Nomura N."/>
            <person name="Kikuchi H."/>
            <person name="Masuho Y."/>
            <person name="Yamashita R."/>
            <person name="Nakai K."/>
            <person name="Yada T."/>
            <person name="Nakamura Y."/>
            <person name="Ohara O."/>
            <person name="Isogai T."/>
            <person name="Sugano S."/>
        </authorList>
    </citation>
    <scope>NUCLEOTIDE SEQUENCE [LARGE SCALE MRNA] (ISOFORMS 1 AND 2)</scope>
    <scope>VARIANTS PHE-344; VAL-355 AND VAL-520</scope>
    <source>
        <tissue>Esophageal carcinoma</tissue>
        <tissue>Trachea</tissue>
    </source>
</reference>
<reference key="2">
    <citation type="journal article" date="2007" name="BMC Genomics">
        <title>The full-ORF clone resource of the German cDNA consortium.</title>
        <authorList>
            <person name="Bechtel S."/>
            <person name="Rosenfelder H."/>
            <person name="Duda A."/>
            <person name="Schmidt C.P."/>
            <person name="Ernst U."/>
            <person name="Wellenreuther R."/>
            <person name="Mehrle A."/>
            <person name="Schuster C."/>
            <person name="Bahr A."/>
            <person name="Bloecker H."/>
            <person name="Heubner D."/>
            <person name="Hoerlein A."/>
            <person name="Michel G."/>
            <person name="Wedler H."/>
            <person name="Koehrer K."/>
            <person name="Ottenwaelder B."/>
            <person name="Poustka A."/>
            <person name="Wiemann S."/>
            <person name="Schupp I."/>
        </authorList>
    </citation>
    <scope>NUCLEOTIDE SEQUENCE [LARGE SCALE MRNA] (ISOFORM 1)</scope>
    <scope>VARIANTS SER-331; PHE-344; VAL-355 AND VAL-520</scope>
    <source>
        <tissue>Retina</tissue>
    </source>
</reference>
<reference key="3">
    <citation type="journal article" date="2006" name="Nature">
        <title>The DNA sequence and biological annotation of human chromosome 1.</title>
        <authorList>
            <person name="Gregory S.G."/>
            <person name="Barlow K.F."/>
            <person name="McLay K.E."/>
            <person name="Kaul R."/>
            <person name="Swarbreck D."/>
            <person name="Dunham A."/>
            <person name="Scott C.E."/>
            <person name="Howe K.L."/>
            <person name="Woodfine K."/>
            <person name="Spencer C.C.A."/>
            <person name="Jones M.C."/>
            <person name="Gillson C."/>
            <person name="Searle S."/>
            <person name="Zhou Y."/>
            <person name="Kokocinski F."/>
            <person name="McDonald L."/>
            <person name="Evans R."/>
            <person name="Phillips K."/>
            <person name="Atkinson A."/>
            <person name="Cooper R."/>
            <person name="Jones C."/>
            <person name="Hall R.E."/>
            <person name="Andrews T.D."/>
            <person name="Lloyd C."/>
            <person name="Ainscough R."/>
            <person name="Almeida J.P."/>
            <person name="Ambrose K.D."/>
            <person name="Anderson F."/>
            <person name="Andrew R.W."/>
            <person name="Ashwell R.I.S."/>
            <person name="Aubin K."/>
            <person name="Babbage A.K."/>
            <person name="Bagguley C.L."/>
            <person name="Bailey J."/>
            <person name="Beasley H."/>
            <person name="Bethel G."/>
            <person name="Bird C.P."/>
            <person name="Bray-Allen S."/>
            <person name="Brown J.Y."/>
            <person name="Brown A.J."/>
            <person name="Buckley D."/>
            <person name="Burton J."/>
            <person name="Bye J."/>
            <person name="Carder C."/>
            <person name="Chapman J.C."/>
            <person name="Clark S.Y."/>
            <person name="Clarke G."/>
            <person name="Clee C."/>
            <person name="Cobley V."/>
            <person name="Collier R.E."/>
            <person name="Corby N."/>
            <person name="Coville G.J."/>
            <person name="Davies J."/>
            <person name="Deadman R."/>
            <person name="Dunn M."/>
            <person name="Earthrowl M."/>
            <person name="Ellington A.G."/>
            <person name="Errington H."/>
            <person name="Frankish A."/>
            <person name="Frankland J."/>
            <person name="French L."/>
            <person name="Garner P."/>
            <person name="Garnett J."/>
            <person name="Gay L."/>
            <person name="Ghori M.R.J."/>
            <person name="Gibson R."/>
            <person name="Gilby L.M."/>
            <person name="Gillett W."/>
            <person name="Glithero R.J."/>
            <person name="Grafham D.V."/>
            <person name="Griffiths C."/>
            <person name="Griffiths-Jones S."/>
            <person name="Grocock R."/>
            <person name="Hammond S."/>
            <person name="Harrison E.S.I."/>
            <person name="Hart E."/>
            <person name="Haugen E."/>
            <person name="Heath P.D."/>
            <person name="Holmes S."/>
            <person name="Holt K."/>
            <person name="Howden P.J."/>
            <person name="Hunt A.R."/>
            <person name="Hunt S.E."/>
            <person name="Hunter G."/>
            <person name="Isherwood J."/>
            <person name="James R."/>
            <person name="Johnson C."/>
            <person name="Johnson D."/>
            <person name="Joy A."/>
            <person name="Kay M."/>
            <person name="Kershaw J.K."/>
            <person name="Kibukawa M."/>
            <person name="Kimberley A.M."/>
            <person name="King A."/>
            <person name="Knights A.J."/>
            <person name="Lad H."/>
            <person name="Laird G."/>
            <person name="Lawlor S."/>
            <person name="Leongamornlert D.A."/>
            <person name="Lloyd D.M."/>
            <person name="Loveland J."/>
            <person name="Lovell J."/>
            <person name="Lush M.J."/>
            <person name="Lyne R."/>
            <person name="Martin S."/>
            <person name="Mashreghi-Mohammadi M."/>
            <person name="Matthews L."/>
            <person name="Matthews N.S.W."/>
            <person name="McLaren S."/>
            <person name="Milne S."/>
            <person name="Mistry S."/>
            <person name="Moore M.J.F."/>
            <person name="Nickerson T."/>
            <person name="O'Dell C.N."/>
            <person name="Oliver K."/>
            <person name="Palmeiri A."/>
            <person name="Palmer S.A."/>
            <person name="Parker A."/>
            <person name="Patel D."/>
            <person name="Pearce A.V."/>
            <person name="Peck A.I."/>
            <person name="Pelan S."/>
            <person name="Phelps K."/>
            <person name="Phillimore B.J."/>
            <person name="Plumb R."/>
            <person name="Rajan J."/>
            <person name="Raymond C."/>
            <person name="Rouse G."/>
            <person name="Saenphimmachak C."/>
            <person name="Sehra H.K."/>
            <person name="Sheridan E."/>
            <person name="Shownkeen R."/>
            <person name="Sims S."/>
            <person name="Skuce C.D."/>
            <person name="Smith M."/>
            <person name="Steward C."/>
            <person name="Subramanian S."/>
            <person name="Sycamore N."/>
            <person name="Tracey A."/>
            <person name="Tromans A."/>
            <person name="Van Helmond Z."/>
            <person name="Wall M."/>
            <person name="Wallis J.M."/>
            <person name="White S."/>
            <person name="Whitehead S.L."/>
            <person name="Wilkinson J.E."/>
            <person name="Willey D.L."/>
            <person name="Williams H."/>
            <person name="Wilming L."/>
            <person name="Wray P.W."/>
            <person name="Wu Z."/>
            <person name="Coulson A."/>
            <person name="Vaudin M."/>
            <person name="Sulston J.E."/>
            <person name="Durbin R.M."/>
            <person name="Hubbard T."/>
            <person name="Wooster R."/>
            <person name="Dunham I."/>
            <person name="Carter N.P."/>
            <person name="McVean G."/>
            <person name="Ross M.T."/>
            <person name="Harrow J."/>
            <person name="Olson M.V."/>
            <person name="Beck S."/>
            <person name="Rogers J."/>
            <person name="Bentley D.R."/>
        </authorList>
    </citation>
    <scope>NUCLEOTIDE SEQUENCE [LARGE SCALE GENOMIC DNA]</scope>
</reference>
<reference key="4">
    <citation type="journal article" date="2004" name="Genome Res.">
        <title>The status, quality, and expansion of the NIH full-length cDNA project: the Mammalian Gene Collection (MGC).</title>
        <authorList>
            <consortium name="The MGC Project Team"/>
        </authorList>
    </citation>
    <scope>NUCLEOTIDE SEQUENCE [LARGE SCALE MRNA] (ISOFORM 1)</scope>
    <scope>VARIANTS SER-331; PHE-344; VAL-355 AND VAL-520</scope>
</reference>
<reference key="5">
    <citation type="journal article" date="2017" name="Nature">
        <title>Ubiquitination and degradation of GBPs by a Shigella effector to suppress host defence.</title>
        <authorList>
            <person name="Li P."/>
            <person name="Jiang W."/>
            <person name="Yu Q."/>
            <person name="Liu W."/>
            <person name="Zhou P."/>
            <person name="Li J."/>
            <person name="Xu J."/>
            <person name="Xu B."/>
            <person name="Wang F."/>
            <person name="Shao F."/>
        </authorList>
    </citation>
    <scope>UBIQUITINATION (MICROBIAL INFECTION)</scope>
</reference>
<evidence type="ECO:0000250" key="1">
    <source>
        <dbReference type="UniProtKB" id="A0A0G2JDV3"/>
    </source>
</evidence>
<evidence type="ECO:0000250" key="2">
    <source>
        <dbReference type="UniProtKB" id="P32455"/>
    </source>
</evidence>
<evidence type="ECO:0000255" key="3">
    <source>
        <dbReference type="PROSITE-ProRule" id="PRU01052"/>
    </source>
</evidence>
<evidence type="ECO:0000269" key="4">
    <source>
    </source>
</evidence>
<evidence type="ECO:0000269" key="5">
    <source>
    </source>
</evidence>
<evidence type="ECO:0000269" key="6">
    <source>
    </source>
</evidence>
<evidence type="ECO:0000269" key="7">
    <source>
    </source>
</evidence>
<evidence type="ECO:0000303" key="8">
    <source>
    </source>
</evidence>
<evidence type="ECO:0000305" key="9"/>
<dbReference type="EC" id="3.6.5.-" evidence="2"/>
<dbReference type="EMBL" id="AK131329">
    <property type="protein sequence ID" value="BAD18489.1"/>
    <property type="molecule type" value="mRNA"/>
</dbReference>
<dbReference type="EMBL" id="AK131356">
    <property type="protein sequence ID" value="BAD18509.1"/>
    <property type="molecule type" value="mRNA"/>
</dbReference>
<dbReference type="EMBL" id="BX537949">
    <property type="protein sequence ID" value="CAD97917.1"/>
    <property type="molecule type" value="mRNA"/>
</dbReference>
<dbReference type="EMBL" id="AL691464">
    <property type="status" value="NOT_ANNOTATED_CDS"/>
    <property type="molecule type" value="Genomic_DNA"/>
</dbReference>
<dbReference type="EMBL" id="BC131713">
    <property type="protein sequence ID" value="AAI31714.1"/>
    <property type="molecule type" value="mRNA"/>
</dbReference>
<dbReference type="CCDS" id="CCDS723.1">
    <molecule id="Q6ZN66-1"/>
</dbReference>
<dbReference type="RefSeq" id="NP_940862.2">
    <molecule id="Q6ZN66-1"/>
    <property type="nucleotide sequence ID" value="NM_198460.3"/>
</dbReference>
<dbReference type="RefSeq" id="XP_011539137.1">
    <molecule id="Q6ZN66-1"/>
    <property type="nucleotide sequence ID" value="XM_011540835.4"/>
</dbReference>
<dbReference type="SMR" id="Q6ZN66"/>
<dbReference type="BioGRID" id="127864">
    <property type="interactions" value="24"/>
</dbReference>
<dbReference type="FunCoup" id="Q6ZN66">
    <property type="interactions" value="52"/>
</dbReference>
<dbReference type="IntAct" id="Q6ZN66">
    <property type="interactions" value="13"/>
</dbReference>
<dbReference type="STRING" id="9606.ENSP00000359485"/>
<dbReference type="iPTMnet" id="Q6ZN66"/>
<dbReference type="PhosphoSitePlus" id="Q6ZN66"/>
<dbReference type="BioMuta" id="GBP6"/>
<dbReference type="DMDM" id="74749570"/>
<dbReference type="jPOST" id="Q6ZN66"/>
<dbReference type="MassIVE" id="Q6ZN66"/>
<dbReference type="PaxDb" id="9606-ENSP00000359485"/>
<dbReference type="PeptideAtlas" id="Q6ZN66"/>
<dbReference type="PRIDE" id="Q6ZN66"/>
<dbReference type="ProteomicsDB" id="67986">
    <molecule id="Q6ZN66-1"/>
</dbReference>
<dbReference type="ProteomicsDB" id="67987">
    <molecule id="Q6ZN66-2"/>
</dbReference>
<dbReference type="Antibodypedia" id="33619">
    <property type="antibodies" value="84 antibodies from 25 providers"/>
</dbReference>
<dbReference type="DNASU" id="163351"/>
<dbReference type="Ensembl" id="ENST00000370456.5">
    <molecule id="Q6ZN66-1"/>
    <property type="protein sequence ID" value="ENSP00000359485.5"/>
    <property type="gene ID" value="ENSG00000183347.15"/>
</dbReference>
<dbReference type="GeneID" id="163351"/>
<dbReference type="KEGG" id="hsa:163351"/>
<dbReference type="MANE-Select" id="ENST00000370456.5">
    <property type="protein sequence ID" value="ENSP00000359485.5"/>
    <property type="RefSeq nucleotide sequence ID" value="NM_198460.3"/>
    <property type="RefSeq protein sequence ID" value="NP_940862.2"/>
</dbReference>
<dbReference type="UCSC" id="uc001dnf.3">
    <molecule id="Q6ZN66-1"/>
    <property type="organism name" value="human"/>
</dbReference>
<dbReference type="AGR" id="HGNC:25395"/>
<dbReference type="CTD" id="163351"/>
<dbReference type="DisGeNET" id="163351"/>
<dbReference type="GeneCards" id="GBP6"/>
<dbReference type="HGNC" id="HGNC:25395">
    <property type="gene designation" value="GBP6"/>
</dbReference>
<dbReference type="HPA" id="ENSG00000183347">
    <property type="expression patterns" value="Tissue enriched (esophagus)"/>
</dbReference>
<dbReference type="MIM" id="612467">
    <property type="type" value="gene"/>
</dbReference>
<dbReference type="neXtProt" id="NX_Q6ZN66"/>
<dbReference type="OpenTargets" id="ENSG00000183347"/>
<dbReference type="PharmGKB" id="PA134964409"/>
<dbReference type="VEuPathDB" id="HostDB:ENSG00000183347"/>
<dbReference type="eggNOG" id="KOG2037">
    <property type="taxonomic scope" value="Eukaryota"/>
</dbReference>
<dbReference type="GeneTree" id="ENSGT00940000154265"/>
<dbReference type="HOGENOM" id="CLU_018608_2_1_1"/>
<dbReference type="InParanoid" id="Q6ZN66"/>
<dbReference type="OMA" id="IMMLEHT"/>
<dbReference type="OrthoDB" id="2135133at2759"/>
<dbReference type="PAN-GO" id="Q6ZN66">
    <property type="GO annotations" value="6 GO annotations based on evolutionary models"/>
</dbReference>
<dbReference type="PhylomeDB" id="Q6ZN66"/>
<dbReference type="TreeFam" id="TF331602"/>
<dbReference type="PathwayCommons" id="Q6ZN66"/>
<dbReference type="Reactome" id="R-HSA-877300">
    <property type="pathway name" value="Interferon gamma signaling"/>
</dbReference>
<dbReference type="SignaLink" id="Q6ZN66"/>
<dbReference type="BioGRID-ORCS" id="163351">
    <property type="hits" value="11 hits in 1142 CRISPR screens"/>
</dbReference>
<dbReference type="GenomeRNAi" id="163351"/>
<dbReference type="Pharos" id="Q6ZN66">
    <property type="development level" value="Tbio"/>
</dbReference>
<dbReference type="PRO" id="PR:Q6ZN66"/>
<dbReference type="Proteomes" id="UP000005640">
    <property type="component" value="Chromosome 1"/>
</dbReference>
<dbReference type="RNAct" id="Q6ZN66">
    <property type="molecule type" value="protein"/>
</dbReference>
<dbReference type="Bgee" id="ENSG00000183347">
    <property type="expression patterns" value="Expressed in gingival epithelium and 82 other cell types or tissues"/>
</dbReference>
<dbReference type="GO" id="GO:0031410">
    <property type="term" value="C:cytoplasmic vesicle"/>
    <property type="evidence" value="ECO:0000318"/>
    <property type="project" value="GO_Central"/>
</dbReference>
<dbReference type="GO" id="GO:0070062">
    <property type="term" value="C:extracellular exosome"/>
    <property type="evidence" value="ECO:0007005"/>
    <property type="project" value="UniProtKB"/>
</dbReference>
<dbReference type="GO" id="GO:0005525">
    <property type="term" value="F:GTP binding"/>
    <property type="evidence" value="ECO:0000318"/>
    <property type="project" value="GO_Central"/>
</dbReference>
<dbReference type="GO" id="GO:0003924">
    <property type="term" value="F:GTPase activity"/>
    <property type="evidence" value="ECO:0000318"/>
    <property type="project" value="GO_Central"/>
</dbReference>
<dbReference type="GO" id="GO:0071346">
    <property type="term" value="P:cellular response to type II interferon"/>
    <property type="evidence" value="ECO:0000250"/>
    <property type="project" value="CAFA"/>
</dbReference>
<dbReference type="GO" id="GO:0042742">
    <property type="term" value="P:defense response to bacterium"/>
    <property type="evidence" value="ECO:0000250"/>
    <property type="project" value="CAFA"/>
</dbReference>
<dbReference type="GO" id="GO:0050830">
    <property type="term" value="P:defense response to Gram-positive bacterium"/>
    <property type="evidence" value="ECO:0000318"/>
    <property type="project" value="GO_Central"/>
</dbReference>
<dbReference type="GO" id="GO:0042832">
    <property type="term" value="P:defense response to protozoan"/>
    <property type="evidence" value="ECO:0000318"/>
    <property type="project" value="GO_Central"/>
</dbReference>
<dbReference type="GO" id="GO:0006955">
    <property type="term" value="P:immune response"/>
    <property type="evidence" value="ECO:0000250"/>
    <property type="project" value="CAFA"/>
</dbReference>
<dbReference type="CDD" id="cd01851">
    <property type="entry name" value="GBP"/>
    <property type="match status" value="1"/>
</dbReference>
<dbReference type="CDD" id="cd16269">
    <property type="entry name" value="GBP_C"/>
    <property type="match status" value="1"/>
</dbReference>
<dbReference type="FunFam" id="1.20.1000.10:FF:000001">
    <property type="entry name" value="Guanylate binding protein 1"/>
    <property type="match status" value="1"/>
</dbReference>
<dbReference type="FunFam" id="3.40.50.300:FF:000422">
    <property type="entry name" value="Guanylate-binding protein 1"/>
    <property type="match status" value="1"/>
</dbReference>
<dbReference type="Gene3D" id="1.20.1000.10">
    <property type="entry name" value="Guanylate-binding protein, C-terminal domain"/>
    <property type="match status" value="1"/>
</dbReference>
<dbReference type="Gene3D" id="3.40.50.300">
    <property type="entry name" value="P-loop containing nucleotide triphosphate hydrolases"/>
    <property type="match status" value="1"/>
</dbReference>
<dbReference type="InterPro" id="IPR030386">
    <property type="entry name" value="G_GB1_RHD3_dom"/>
</dbReference>
<dbReference type="InterPro" id="IPR037684">
    <property type="entry name" value="GBP_C"/>
</dbReference>
<dbReference type="InterPro" id="IPR003191">
    <property type="entry name" value="Guanylate-bd/ATL_C"/>
</dbReference>
<dbReference type="InterPro" id="IPR036543">
    <property type="entry name" value="Guanylate-bd_C_sf"/>
</dbReference>
<dbReference type="InterPro" id="IPR015894">
    <property type="entry name" value="Guanylate-bd_N"/>
</dbReference>
<dbReference type="InterPro" id="IPR027417">
    <property type="entry name" value="P-loop_NTPase"/>
</dbReference>
<dbReference type="PANTHER" id="PTHR10751">
    <property type="entry name" value="GUANYLATE BINDING PROTEIN"/>
    <property type="match status" value="1"/>
</dbReference>
<dbReference type="Pfam" id="PF02263">
    <property type="entry name" value="GBP"/>
    <property type="match status" value="1"/>
</dbReference>
<dbReference type="Pfam" id="PF02841">
    <property type="entry name" value="GBP_C"/>
    <property type="match status" value="1"/>
</dbReference>
<dbReference type="SUPFAM" id="SSF48340">
    <property type="entry name" value="Interferon-induced guanylate-binding protein 1 (GBP1), C-terminal domain"/>
    <property type="match status" value="1"/>
</dbReference>
<dbReference type="SUPFAM" id="SSF52540">
    <property type="entry name" value="P-loop containing nucleoside triphosphate hydrolases"/>
    <property type="match status" value="1"/>
</dbReference>
<dbReference type="PROSITE" id="PS51715">
    <property type="entry name" value="G_GB1_RHD3"/>
    <property type="match status" value="1"/>
</dbReference>
<sequence>MESGPKMLAPVCLVENNNEQLLVNQQAIQILEKISQPVVVVAIVGLYRTGKSYLMNHLAGQNHGFPLGSTVQSETKGIWMWCVPHPSKPNHTLVLLDTEGLGDVEKGDPKNDSWIFALAVLLCSTFVYNSMSTINHQALEQLHYVTELTELIKAKSSPRPDGVEDSTEFVSFFPDFLWTVRDFTLELKLNGHPITEDEYLENALKLIQGNNPRVQTSNFPRECIRRFFPKRKCFVFDRPTNDKDLLANIEKVSEKQLDPKFQEQTNIFCSYIFTHARTKTLREGITVTGNRLGTLAVTYVEAINSGAVPCLENAVITLAQRENSAAVQRAADYYSQQMAQRVKLPTDTLQELLDMHAACEREAIAIFMEHSFKDENQEFQKKFMETTMNKKGDFLLQNEESSVQYCQAKLNELSKGLMESISAGSFSVPGGHKLYMETKERIEQDYWQVPRKGVKAKEVFQRFLESQMVIEESILQSDKALTDREKAVAVDRAKKEAAEKEQELLKQKLQEQQQQMEAQDKSRKENIAQLKEKLQMEREHLLREQIMMLEHTQKVQNDWLHEGFKKKYEEMNAEISQFKRMIDTTKNDDTPWIARTLDNLADELTAILSAPAKLIGHGVKGVSSLFKKHKLPF</sequence>
<accession>Q6ZN66</accession>
<accession>A2RRM3</accession>
<accession>Q6ZN86</accession>
<accession>Q7Z3F0</accession>
<protein>
    <recommendedName>
        <fullName>Guanylate-binding protein 6</fullName>
        <ecNumber evidence="2">3.6.5.-</ecNumber>
    </recommendedName>
    <alternativeName>
        <fullName>GTP-binding protein 6</fullName>
        <shortName>GBP-6</shortName>
    </alternativeName>
    <alternativeName>
        <fullName>Guanine nucleotide-binding protein 6</fullName>
    </alternativeName>
</protein>
<feature type="chain" id="PRO_0000313811" description="Guanylate-binding protein 6">
    <location>
        <begin position="1"/>
        <end position="633"/>
    </location>
</feature>
<feature type="domain" description="GB1/RHD3-type G" evidence="3">
    <location>
        <begin position="35"/>
        <end position="277"/>
    </location>
</feature>
<feature type="region of interest" description="GTPase domain (Globular)" evidence="2">
    <location>
        <begin position="1"/>
        <end position="310"/>
    </location>
</feature>
<feature type="binding site" evidence="2">
    <location>
        <begin position="45"/>
        <end position="52"/>
    </location>
    <ligand>
        <name>GTP</name>
        <dbReference type="ChEBI" id="CHEBI:37565"/>
    </ligand>
</feature>
<feature type="binding site" evidence="2">
    <location>
        <begin position="67"/>
        <end position="69"/>
    </location>
    <ligand>
        <name>GTP</name>
        <dbReference type="ChEBI" id="CHEBI:37565"/>
    </ligand>
</feature>
<feature type="binding site" evidence="2">
    <location>
        <begin position="97"/>
        <end position="101"/>
    </location>
    <ligand>
        <name>GTP</name>
        <dbReference type="ChEBI" id="CHEBI:37565"/>
    </ligand>
</feature>
<feature type="splice variant" id="VSP_030155" description="In isoform 2." evidence="8">
    <location>
        <begin position="1"/>
        <end position="337"/>
    </location>
</feature>
<feature type="sequence variant" id="VAR_037750" description="In dbSNP:rs4582772.">
    <original>T</original>
    <variation>I</variation>
    <location>
        <position position="278"/>
    </location>
</feature>
<feature type="sequence variant" id="VAR_037751" description="In dbSNP:rs4658359." evidence="5 6">
    <original>A</original>
    <variation>S</variation>
    <location>
        <position position="331"/>
    </location>
</feature>
<feature type="sequence variant" id="VAR_037752" description="In dbSNP:rs4658360." evidence="4 5 6">
    <original>L</original>
    <variation>F</variation>
    <location>
        <position position="344"/>
    </location>
</feature>
<feature type="sequence variant" id="VAR_037753" description="In dbSNP:rs4658146." evidence="4 5 6">
    <original>M</original>
    <variation>V</variation>
    <location>
        <position position="355"/>
    </location>
</feature>
<feature type="sequence variant" id="VAR_037754" description="In dbSNP:rs959460." evidence="4 5 6">
    <original>D</original>
    <variation>V</variation>
    <location>
        <position position="520"/>
    </location>
</feature>
<feature type="sequence conflict" description="In Ref. 2; CAD97917." evidence="9" ref="2">
    <original>L</original>
    <variation>Q</variation>
    <location>
        <position position="13"/>
    </location>
</feature>
<feature type="sequence conflict" description="In Ref. 2; CAD97917." evidence="9" ref="2">
    <original>N</original>
    <variation>D</variation>
    <location>
        <position position="313"/>
    </location>
</feature>
<comment type="function">
    <text evidence="1">Interferon (IFN)-inducible GTPase that plays important roles in innate immunity against a diverse range of bacterial, viral and protozoan pathogens, such as bacterial pathogens Listeria monocytogenes and Mycobacterium bovis BCG as well as the protozoan pathogen Toxoplasma gondii (By similarity). Confers protection to several pathogens, including the bacterial pathogens Listeria monocytogenes and Mycobacterium bovis BCG as well as the protozoan pathogen Toxoplasma gondii (By similarity).</text>
</comment>
<comment type="catalytic activity">
    <reaction evidence="2">
        <text>GTP + H2O = GDP + phosphate + H(+)</text>
        <dbReference type="Rhea" id="RHEA:19669"/>
        <dbReference type="ChEBI" id="CHEBI:15377"/>
        <dbReference type="ChEBI" id="CHEBI:15378"/>
        <dbReference type="ChEBI" id="CHEBI:37565"/>
        <dbReference type="ChEBI" id="CHEBI:43474"/>
        <dbReference type="ChEBI" id="CHEBI:58189"/>
    </reaction>
</comment>
<comment type="interaction">
    <interactant intactId="EBI-20864397">
        <id>Q6ZN66</id>
    </interactant>
    <interactant intactId="EBI-21835810">
        <id>Q8N8V2</id>
        <label>GBP7</label>
    </interactant>
    <organismsDiffer>false</organismsDiffer>
    <experiments>2</experiments>
</comment>
<comment type="subcellular location">
    <subcellularLocation>
        <location evidence="1">Cytoplasmic vesicle</location>
    </subcellularLocation>
</comment>
<comment type="alternative products">
    <event type="alternative splicing"/>
    <isoform>
        <id>Q6ZN66-1</id>
        <name>1</name>
        <sequence type="displayed"/>
    </isoform>
    <isoform>
        <id>Q6ZN66-2</id>
        <name>2</name>
        <sequence type="described" ref="VSP_030155"/>
    </isoform>
</comment>
<comment type="PTM">
    <text evidence="7">(Microbial infection) Ubiquitinated by S.flexneri IpaH9.8, leading to its degradation by the proteasome, thereby preventing its ability to promote host defense against bacterial infection.</text>
</comment>
<comment type="similarity">
    <text evidence="3">Belongs to the TRAFAC class dynamin-like GTPase superfamily. GB1/RHD3 GTPase family. GB1 subfamily.</text>
</comment>
<organism>
    <name type="scientific">Homo sapiens</name>
    <name type="common">Human</name>
    <dbReference type="NCBI Taxonomy" id="9606"/>
    <lineage>
        <taxon>Eukaryota</taxon>
        <taxon>Metazoa</taxon>
        <taxon>Chordata</taxon>
        <taxon>Craniata</taxon>
        <taxon>Vertebrata</taxon>
        <taxon>Euteleostomi</taxon>
        <taxon>Mammalia</taxon>
        <taxon>Eutheria</taxon>
        <taxon>Euarchontoglires</taxon>
        <taxon>Primates</taxon>
        <taxon>Haplorrhini</taxon>
        <taxon>Catarrhini</taxon>
        <taxon>Hominidae</taxon>
        <taxon>Homo</taxon>
    </lineage>
</organism>
<keyword id="KW-0025">Alternative splicing</keyword>
<keyword id="KW-0929">Antimicrobial</keyword>
<keyword id="KW-0968">Cytoplasmic vesicle</keyword>
<keyword id="KW-0342">GTP-binding</keyword>
<keyword id="KW-0378">Hydrolase</keyword>
<keyword id="KW-0391">Immunity</keyword>
<keyword id="KW-0399">Innate immunity</keyword>
<keyword id="KW-0547">Nucleotide-binding</keyword>
<keyword id="KW-1267">Proteomics identification</keyword>
<keyword id="KW-1185">Reference proteome</keyword>
<keyword id="KW-0832">Ubl conjugation</keyword>
<proteinExistence type="evidence at protein level"/>
<gene>
    <name type="primary">GBP6</name>
</gene>
<name>GBP6_HUMAN</name>